<reference key="1">
    <citation type="journal article" date="2002" name="Proc. Natl. Acad. Sci. U.S.A.">
        <title>Extensive mosaic structure revealed by the complete genome sequence of uropathogenic Escherichia coli.</title>
        <authorList>
            <person name="Welch R.A."/>
            <person name="Burland V."/>
            <person name="Plunkett G. III"/>
            <person name="Redford P."/>
            <person name="Roesch P."/>
            <person name="Rasko D."/>
            <person name="Buckles E.L."/>
            <person name="Liou S.-R."/>
            <person name="Boutin A."/>
            <person name="Hackett J."/>
            <person name="Stroud D."/>
            <person name="Mayhew G.F."/>
            <person name="Rose D.J."/>
            <person name="Zhou S."/>
            <person name="Schwartz D.C."/>
            <person name="Perna N.T."/>
            <person name="Mobley H.L.T."/>
            <person name="Donnenberg M.S."/>
            <person name="Blattner F.R."/>
        </authorList>
    </citation>
    <scope>NUCLEOTIDE SEQUENCE [LARGE SCALE GENOMIC DNA]</scope>
    <source>
        <strain>CFT073 / ATCC 700928 / UPEC</strain>
    </source>
</reference>
<organism>
    <name type="scientific">Escherichia coli O6:H1 (strain CFT073 / ATCC 700928 / UPEC)</name>
    <dbReference type="NCBI Taxonomy" id="199310"/>
    <lineage>
        <taxon>Bacteria</taxon>
        <taxon>Pseudomonadati</taxon>
        <taxon>Pseudomonadota</taxon>
        <taxon>Gammaproteobacteria</taxon>
        <taxon>Enterobacterales</taxon>
        <taxon>Enterobacteriaceae</taxon>
        <taxon>Escherichia</taxon>
    </lineage>
</organism>
<evidence type="ECO:0000250" key="1"/>
<evidence type="ECO:0000305" key="2"/>
<protein>
    <recommendedName>
        <fullName>NADH-quinone oxidoreductase subunit I</fullName>
        <ecNumber>7.1.1.-</ecNumber>
    </recommendedName>
    <alternativeName>
        <fullName>NADH dehydrogenase I subunit I</fullName>
    </alternativeName>
    <alternativeName>
        <fullName>NDH-1 subunit I</fullName>
    </alternativeName>
    <alternativeName>
        <fullName>NUO9</fullName>
    </alternativeName>
</protein>
<feature type="chain" id="PRO_0000118724" description="NADH-quinone oxidoreductase subunit I">
    <location>
        <begin position="1"/>
        <end position="180"/>
    </location>
</feature>
<feature type="domain" description="4Fe-4S ferredoxin-type 1">
    <location>
        <begin position="50"/>
        <end position="80"/>
    </location>
</feature>
<feature type="domain" description="4Fe-4S ferredoxin-type 2">
    <location>
        <begin position="90"/>
        <end position="119"/>
    </location>
</feature>
<feature type="binding site" evidence="1">
    <location>
        <position position="60"/>
    </location>
    <ligand>
        <name>[4Fe-4S] cluster</name>
        <dbReference type="ChEBI" id="CHEBI:49883"/>
        <label>1</label>
    </ligand>
</feature>
<feature type="binding site" evidence="1">
    <location>
        <position position="63"/>
    </location>
    <ligand>
        <name>[4Fe-4S] cluster</name>
        <dbReference type="ChEBI" id="CHEBI:49883"/>
        <label>1</label>
    </ligand>
</feature>
<feature type="binding site" evidence="1">
    <location>
        <position position="66"/>
    </location>
    <ligand>
        <name>[4Fe-4S] cluster</name>
        <dbReference type="ChEBI" id="CHEBI:49883"/>
        <label>1</label>
    </ligand>
</feature>
<feature type="binding site" evidence="1">
    <location>
        <position position="70"/>
    </location>
    <ligand>
        <name>[4Fe-4S] cluster</name>
        <dbReference type="ChEBI" id="CHEBI:49883"/>
        <label>2</label>
    </ligand>
</feature>
<feature type="binding site" evidence="1">
    <location>
        <position position="99"/>
    </location>
    <ligand>
        <name>[4Fe-4S] cluster</name>
        <dbReference type="ChEBI" id="CHEBI:49883"/>
        <label>2</label>
    </ligand>
</feature>
<feature type="binding site" evidence="1">
    <location>
        <position position="102"/>
    </location>
    <ligand>
        <name>[4Fe-4S] cluster</name>
        <dbReference type="ChEBI" id="CHEBI:49883"/>
        <label>2</label>
    </ligand>
</feature>
<feature type="binding site" evidence="1">
    <location>
        <position position="105"/>
    </location>
    <ligand>
        <name>[4Fe-4S] cluster</name>
        <dbReference type="ChEBI" id="CHEBI:49883"/>
        <label>2</label>
    </ligand>
</feature>
<feature type="binding site" evidence="1">
    <location>
        <position position="109"/>
    </location>
    <ligand>
        <name>[4Fe-4S] cluster</name>
        <dbReference type="ChEBI" id="CHEBI:49883"/>
        <label>1</label>
    </ligand>
</feature>
<keyword id="KW-0004">4Fe-4S</keyword>
<keyword id="KW-0997">Cell inner membrane</keyword>
<keyword id="KW-1003">Cell membrane</keyword>
<keyword id="KW-0408">Iron</keyword>
<keyword id="KW-0411">Iron-sulfur</keyword>
<keyword id="KW-0472">Membrane</keyword>
<keyword id="KW-0479">Metal-binding</keyword>
<keyword id="KW-0520">NAD</keyword>
<keyword id="KW-0874">Quinone</keyword>
<keyword id="KW-1185">Reference proteome</keyword>
<keyword id="KW-0677">Repeat</keyword>
<keyword id="KW-1278">Translocase</keyword>
<keyword id="KW-0830">Ubiquinone</keyword>
<comment type="function">
    <text evidence="1">NDH-1 shuttles electrons from NADH, via FMN and iron-sulfur (Fe-S) centers, to quinones in the respiratory chain. The immediate electron acceptor for the enzyme in this species is believed to be ubiquinone. Couples the redox reaction to proton translocation (for every two electrons transferred, four hydrogen ions are translocated across the cytoplasmic membrane), and thus conserves the redox energy in a proton gradient.</text>
</comment>
<comment type="catalytic activity">
    <reaction>
        <text>a quinone + NADH + 5 H(+)(in) = a quinol + NAD(+) + 4 H(+)(out)</text>
        <dbReference type="Rhea" id="RHEA:57888"/>
        <dbReference type="ChEBI" id="CHEBI:15378"/>
        <dbReference type="ChEBI" id="CHEBI:24646"/>
        <dbReference type="ChEBI" id="CHEBI:57540"/>
        <dbReference type="ChEBI" id="CHEBI:57945"/>
        <dbReference type="ChEBI" id="CHEBI:132124"/>
    </reaction>
</comment>
<comment type="cofactor">
    <cofactor evidence="1">
        <name>[4Fe-4S] cluster</name>
        <dbReference type="ChEBI" id="CHEBI:49883"/>
    </cofactor>
    <text evidence="1">Binds 2 [4Fe-4S] clusters per subunit.</text>
</comment>
<comment type="subunit">
    <text evidence="1">NDH-1 is composed of 13 different subunits. Subunits NuoA, H, J, K, L, M, N constitute the membrane sector of the complex (By similarity).</text>
</comment>
<comment type="subcellular location">
    <subcellularLocation>
        <location evidence="2">Cell inner membrane</location>
        <topology evidence="2">Peripheral membrane protein</topology>
    </subcellularLocation>
</comment>
<comment type="similarity">
    <text evidence="2">Belongs to the complex I 23 kDa subunit family.</text>
</comment>
<sequence>MTLKELLVGFGTQVRSIWMIGLHAFAKRETRMYPEEPVYLPPRYRGRIVLTRDPDGEERCVACNLCAVACPVGCISLQKAETKDGRWYPEFFRINFSRCIFCGLCEEACPTTAIQLTPDFEMGEYKRQDLVYEKEDLLISGPGKYPEYNFYRMAGMAIDGKDKGEAENEAKPIDVKSLLP</sequence>
<accession>P0AFD7</accession>
<accession>P33604</accession>
<accession>P76488</accession>
<accession>P78183</accession>
<gene>
    <name type="primary">nuoI</name>
    <name type="ordered locus">c2822</name>
</gene>
<proteinExistence type="inferred from homology"/>
<dbReference type="EC" id="7.1.1.-"/>
<dbReference type="EMBL" id="AE014075">
    <property type="protein sequence ID" value="AAN81276.1"/>
    <property type="molecule type" value="Genomic_DNA"/>
</dbReference>
<dbReference type="RefSeq" id="WP_000172749.1">
    <property type="nucleotide sequence ID" value="NZ_CP051263.1"/>
</dbReference>
<dbReference type="SMR" id="P0AFD7"/>
<dbReference type="STRING" id="199310.c2822"/>
<dbReference type="GeneID" id="89517116"/>
<dbReference type="KEGG" id="ecc:c2822"/>
<dbReference type="eggNOG" id="COG1143">
    <property type="taxonomic scope" value="Bacteria"/>
</dbReference>
<dbReference type="HOGENOM" id="CLU_067218_4_3_6"/>
<dbReference type="BioCyc" id="ECOL199310:C2822-MONOMER"/>
<dbReference type="Proteomes" id="UP000001410">
    <property type="component" value="Chromosome"/>
</dbReference>
<dbReference type="GO" id="GO:0005886">
    <property type="term" value="C:plasma membrane"/>
    <property type="evidence" value="ECO:0007669"/>
    <property type="project" value="UniProtKB-SubCell"/>
</dbReference>
<dbReference type="GO" id="GO:0051539">
    <property type="term" value="F:4 iron, 4 sulfur cluster binding"/>
    <property type="evidence" value="ECO:0007669"/>
    <property type="project" value="UniProtKB-KW"/>
</dbReference>
<dbReference type="GO" id="GO:0005506">
    <property type="term" value="F:iron ion binding"/>
    <property type="evidence" value="ECO:0007669"/>
    <property type="project" value="UniProtKB-UniRule"/>
</dbReference>
<dbReference type="GO" id="GO:0050136">
    <property type="term" value="F:NADH:ubiquinone reductase (non-electrogenic) activity"/>
    <property type="evidence" value="ECO:0007669"/>
    <property type="project" value="UniProtKB-UniRule"/>
</dbReference>
<dbReference type="GO" id="GO:0048038">
    <property type="term" value="F:quinone binding"/>
    <property type="evidence" value="ECO:0007669"/>
    <property type="project" value="UniProtKB-KW"/>
</dbReference>
<dbReference type="GO" id="GO:0009060">
    <property type="term" value="P:aerobic respiration"/>
    <property type="evidence" value="ECO:0007669"/>
    <property type="project" value="TreeGrafter"/>
</dbReference>
<dbReference type="FunFam" id="3.30.70.3270:FF:000002">
    <property type="entry name" value="NADH-quinone oxidoreductase subunit I"/>
    <property type="match status" value="1"/>
</dbReference>
<dbReference type="Gene3D" id="3.30.70.3270">
    <property type="match status" value="1"/>
</dbReference>
<dbReference type="HAMAP" id="MF_01351">
    <property type="entry name" value="NDH1_NuoI"/>
    <property type="match status" value="1"/>
</dbReference>
<dbReference type="InterPro" id="IPR017896">
    <property type="entry name" value="4Fe4S_Fe-S-bd"/>
</dbReference>
<dbReference type="InterPro" id="IPR017900">
    <property type="entry name" value="4Fe4S_Fe_S_CS"/>
</dbReference>
<dbReference type="InterPro" id="IPR010226">
    <property type="entry name" value="NADH_quinone_OxRdtase_chainI"/>
</dbReference>
<dbReference type="NCBIfam" id="TIGR01971">
    <property type="entry name" value="NuoI"/>
    <property type="match status" value="1"/>
</dbReference>
<dbReference type="NCBIfam" id="NF004536">
    <property type="entry name" value="PRK05888.1-1"/>
    <property type="match status" value="1"/>
</dbReference>
<dbReference type="PANTHER" id="PTHR10849:SF20">
    <property type="entry name" value="NADH DEHYDROGENASE [UBIQUINONE] IRON-SULFUR PROTEIN 8, MITOCHONDRIAL"/>
    <property type="match status" value="1"/>
</dbReference>
<dbReference type="PANTHER" id="PTHR10849">
    <property type="entry name" value="NADH DEHYDROGENASE UBIQUINONE IRON-SULFUR PROTEIN 8, MITOCHONDRIAL"/>
    <property type="match status" value="1"/>
</dbReference>
<dbReference type="Pfam" id="PF12838">
    <property type="entry name" value="Fer4_7"/>
    <property type="match status" value="1"/>
</dbReference>
<dbReference type="SUPFAM" id="SSF54862">
    <property type="entry name" value="4Fe-4S ferredoxins"/>
    <property type="match status" value="1"/>
</dbReference>
<dbReference type="PROSITE" id="PS00198">
    <property type="entry name" value="4FE4S_FER_1"/>
    <property type="match status" value="2"/>
</dbReference>
<dbReference type="PROSITE" id="PS51379">
    <property type="entry name" value="4FE4S_FER_2"/>
    <property type="match status" value="2"/>
</dbReference>
<name>NUOI_ECOL6</name>